<evidence type="ECO:0000255" key="1">
    <source>
        <dbReference type="HAMAP-Rule" id="MF_01368"/>
    </source>
</evidence>
<evidence type="ECO:0000305" key="2"/>
<name>RL17_BRUO2</name>
<organism>
    <name type="scientific">Brucella ovis (strain ATCC 25840 / 63/290 / NCTC 10512)</name>
    <dbReference type="NCBI Taxonomy" id="444178"/>
    <lineage>
        <taxon>Bacteria</taxon>
        <taxon>Pseudomonadati</taxon>
        <taxon>Pseudomonadota</taxon>
        <taxon>Alphaproteobacteria</taxon>
        <taxon>Hyphomicrobiales</taxon>
        <taxon>Brucellaceae</taxon>
        <taxon>Brucella/Ochrobactrum group</taxon>
        <taxon>Brucella</taxon>
    </lineage>
</organism>
<comment type="subunit">
    <text evidence="1">Part of the 50S ribosomal subunit. Contacts protein L32.</text>
</comment>
<comment type="similarity">
    <text evidence="1">Belongs to the bacterial ribosomal protein bL17 family.</text>
</comment>
<feature type="chain" id="PRO_1000055781" description="Large ribosomal subunit protein bL17">
    <location>
        <begin position="1"/>
        <end position="142"/>
    </location>
</feature>
<reference key="1">
    <citation type="journal article" date="2009" name="PLoS ONE">
        <title>Genome degradation in Brucella ovis corresponds with narrowing of its host range and tissue tropism.</title>
        <authorList>
            <person name="Tsolis R.M."/>
            <person name="Seshadri R."/>
            <person name="Santos R.L."/>
            <person name="Sangari F.J."/>
            <person name="Lobo J.M."/>
            <person name="de Jong M.F."/>
            <person name="Ren Q."/>
            <person name="Myers G."/>
            <person name="Brinkac L.M."/>
            <person name="Nelson W.C."/>
            <person name="Deboy R.T."/>
            <person name="Angiuoli S."/>
            <person name="Khouri H."/>
            <person name="Dimitrov G."/>
            <person name="Robinson J.R."/>
            <person name="Mulligan S."/>
            <person name="Walker R.L."/>
            <person name="Elzer P.E."/>
            <person name="Hassan K.A."/>
            <person name="Paulsen I.T."/>
        </authorList>
    </citation>
    <scope>NUCLEOTIDE SEQUENCE [LARGE SCALE GENOMIC DNA]</scope>
    <source>
        <strain>ATCC 25840 / 63/290 / NCTC 10512</strain>
    </source>
</reference>
<accession>A5VQY1</accession>
<dbReference type="EMBL" id="CP000708">
    <property type="protein sequence ID" value="ABQ60540.1"/>
    <property type="molecule type" value="Genomic_DNA"/>
</dbReference>
<dbReference type="RefSeq" id="WP_004688454.1">
    <property type="nucleotide sequence ID" value="NC_009505.1"/>
</dbReference>
<dbReference type="SMR" id="A5VQY1"/>
<dbReference type="GeneID" id="97533549"/>
<dbReference type="KEGG" id="bov:BOV_1171"/>
<dbReference type="HOGENOM" id="CLU_074407_2_0_5"/>
<dbReference type="PhylomeDB" id="A5VQY1"/>
<dbReference type="Proteomes" id="UP000006383">
    <property type="component" value="Chromosome I"/>
</dbReference>
<dbReference type="GO" id="GO:0022625">
    <property type="term" value="C:cytosolic large ribosomal subunit"/>
    <property type="evidence" value="ECO:0007669"/>
    <property type="project" value="TreeGrafter"/>
</dbReference>
<dbReference type="GO" id="GO:0003735">
    <property type="term" value="F:structural constituent of ribosome"/>
    <property type="evidence" value="ECO:0007669"/>
    <property type="project" value="InterPro"/>
</dbReference>
<dbReference type="GO" id="GO:0006412">
    <property type="term" value="P:translation"/>
    <property type="evidence" value="ECO:0007669"/>
    <property type="project" value="UniProtKB-UniRule"/>
</dbReference>
<dbReference type="FunFam" id="3.90.1030.10:FF:000001">
    <property type="entry name" value="50S ribosomal protein L17"/>
    <property type="match status" value="1"/>
</dbReference>
<dbReference type="Gene3D" id="3.90.1030.10">
    <property type="entry name" value="Ribosomal protein L17"/>
    <property type="match status" value="1"/>
</dbReference>
<dbReference type="HAMAP" id="MF_01368">
    <property type="entry name" value="Ribosomal_bL17"/>
    <property type="match status" value="1"/>
</dbReference>
<dbReference type="InterPro" id="IPR000456">
    <property type="entry name" value="Ribosomal_bL17"/>
</dbReference>
<dbReference type="InterPro" id="IPR047859">
    <property type="entry name" value="Ribosomal_bL17_CS"/>
</dbReference>
<dbReference type="InterPro" id="IPR036373">
    <property type="entry name" value="Ribosomal_bL17_sf"/>
</dbReference>
<dbReference type="NCBIfam" id="TIGR00059">
    <property type="entry name" value="L17"/>
    <property type="match status" value="1"/>
</dbReference>
<dbReference type="PANTHER" id="PTHR14413:SF16">
    <property type="entry name" value="LARGE RIBOSOMAL SUBUNIT PROTEIN BL17M"/>
    <property type="match status" value="1"/>
</dbReference>
<dbReference type="PANTHER" id="PTHR14413">
    <property type="entry name" value="RIBOSOMAL PROTEIN L17"/>
    <property type="match status" value="1"/>
</dbReference>
<dbReference type="Pfam" id="PF01196">
    <property type="entry name" value="Ribosomal_L17"/>
    <property type="match status" value="1"/>
</dbReference>
<dbReference type="SUPFAM" id="SSF64263">
    <property type="entry name" value="Prokaryotic ribosomal protein L17"/>
    <property type="match status" value="1"/>
</dbReference>
<dbReference type="PROSITE" id="PS01167">
    <property type="entry name" value="RIBOSOMAL_L17"/>
    <property type="match status" value="1"/>
</dbReference>
<keyword id="KW-0687">Ribonucleoprotein</keyword>
<keyword id="KW-0689">Ribosomal protein</keyword>
<protein>
    <recommendedName>
        <fullName evidence="1">Large ribosomal subunit protein bL17</fullName>
    </recommendedName>
    <alternativeName>
        <fullName evidence="2">50S ribosomal protein L17</fullName>
    </alternativeName>
</protein>
<sequence length="142" mass="15608">MRHGNGYRKLNRTASHRKAMFANMAASLIEHEQIVTTLPKAKEIRPIVEKLVTLGKRGDLHARRQAISAIRDVKLVAKLFDTLAARYATRNGGYIRIMKAGFRAGDNAPLAVVEFVERDVDAKGKADRARVEAEAAAEADAA</sequence>
<gene>
    <name evidence="1" type="primary">rplQ</name>
    <name type="ordered locus">BOV_1171</name>
</gene>
<proteinExistence type="inferred from homology"/>